<feature type="propeptide" id="PRO_0000424222" description="Removed in mature form; occupies the channel of the substrate amino acid from the outside of the protein to the interior flavin ring in the precursor" evidence="9">
    <location>
        <begin position="1"/>
        <end position="15"/>
    </location>
</feature>
<feature type="chain" id="PRO_5000051132" description="Phenylalanine 2-monooxygenase alpha subunit">
    <location>
        <begin position="16"/>
        <end position="107"/>
    </location>
</feature>
<feature type="propeptide" id="PRO_0000424223" description="Linker peptide" evidence="10">
    <location>
        <begin position="108"/>
        <end position="109"/>
    </location>
</feature>
<feature type="chain" id="PRO_0000424224" description="Phenylalanine 2-monooxygenase beta subunit">
    <location>
        <begin position="110"/>
        <end position="714"/>
    </location>
</feature>
<feature type="binding site" evidence="3">
    <location>
        <position position="2"/>
    </location>
    <ligand>
        <name>FAD</name>
        <dbReference type="ChEBI" id="CHEBI:57692"/>
    </ligand>
</feature>
<feature type="binding site" evidence="3">
    <location>
        <position position="68"/>
    </location>
    <ligand>
        <name>FAD</name>
        <dbReference type="ChEBI" id="CHEBI:57692"/>
    </ligand>
</feature>
<feature type="binding site" evidence="3">
    <location>
        <begin position="95"/>
        <end position="96"/>
    </location>
    <ligand>
        <name>FAD</name>
        <dbReference type="ChEBI" id="CHEBI:57692"/>
    </ligand>
</feature>
<feature type="binding site" evidence="3">
    <location>
        <position position="120"/>
    </location>
    <ligand>
        <name>FAD</name>
        <dbReference type="ChEBI" id="CHEBI:57692"/>
    </ligand>
</feature>
<feature type="binding site" evidence="3">
    <location>
        <begin position="141"/>
        <end position="144"/>
    </location>
    <ligand>
        <name>FAD</name>
        <dbReference type="ChEBI" id="CHEBI:57692"/>
    </ligand>
</feature>
<feature type="binding site">
    <location>
        <position position="144"/>
    </location>
    <ligand>
        <name>substrate</name>
    </ligand>
</feature>
<feature type="binding site" evidence="3">
    <location>
        <position position="375"/>
    </location>
    <ligand>
        <name>FAD</name>
        <dbReference type="ChEBI" id="CHEBI:57692"/>
    </ligand>
</feature>
<feature type="binding site">
    <location>
        <position position="537"/>
    </location>
    <ligand>
        <name>substrate</name>
    </ligand>
</feature>
<feature type="binding site" evidence="3">
    <location>
        <begin position="652"/>
        <end position="653"/>
    </location>
    <ligand>
        <name>FAD</name>
        <dbReference type="ChEBI" id="CHEBI:57692"/>
    </ligand>
</feature>
<feature type="binding site" evidence="3">
    <location>
        <begin position="660"/>
        <end position="662"/>
    </location>
    <ligand>
        <name>FAD</name>
        <dbReference type="ChEBI" id="CHEBI:57692"/>
    </ligand>
</feature>
<feature type="binding site">
    <location>
        <position position="660"/>
    </location>
    <ligand>
        <name>substrate</name>
    </ligand>
</feature>
<feature type="mutagenesis site" description="Reduces catalytic efficiency 10-fold." evidence="3">
    <original>M</original>
    <variation>A</variation>
    <location>
        <position position="143"/>
    </location>
</feature>
<feature type="mutagenesis site" description="Abolishes catalytic activity." evidence="4">
    <original>R</original>
    <variation>A</variation>
    <location>
        <position position="144"/>
    </location>
</feature>
<feature type="mutagenesis site" description="Reduces catalytic activity 400-fold." evidence="4">
    <original>R</original>
    <variation>K</variation>
    <location>
        <position position="144"/>
    </location>
</feature>
<feature type="mutagenesis site" description="Reduces catalytic efficiency 200-fold." evidence="3">
    <original>K</original>
    <variation>A</variation>
    <location>
        <position position="479"/>
    </location>
</feature>
<feature type="mutagenesis site" description="Abolishes catalytic activity." evidence="4">
    <original>Y</original>
    <variation>A</variation>
    <location>
        <position position="537"/>
    </location>
</feature>
<feature type="mutagenesis site" description="Reduces catalytic activity 17-fold." evidence="4">
    <original>Y</original>
    <variation>F</variation>
    <location>
        <position position="537"/>
    </location>
</feature>
<feature type="sequence conflict" description="In Ref. 3; AA sequence." evidence="11" ref="3">
    <original>E</original>
    <variation>W</variation>
    <location>
        <position position="178"/>
    </location>
</feature>
<feature type="helix" evidence="14">
    <location>
        <begin position="22"/>
        <end position="28"/>
    </location>
</feature>
<feature type="turn" evidence="13">
    <location>
        <begin position="29"/>
        <end position="31"/>
    </location>
</feature>
<feature type="helix" evidence="14">
    <location>
        <begin position="35"/>
        <end position="37"/>
    </location>
</feature>
<feature type="helix" evidence="14">
    <location>
        <begin position="42"/>
        <end position="45"/>
    </location>
</feature>
<feature type="strand" evidence="14">
    <location>
        <begin position="55"/>
        <end position="63"/>
    </location>
</feature>
<feature type="helix" evidence="14">
    <location>
        <begin position="67"/>
        <end position="80"/>
    </location>
</feature>
<feature type="strand" evidence="14">
    <location>
        <begin position="88"/>
        <end position="94"/>
    </location>
</feature>
<feature type="helix" evidence="14">
    <location>
        <begin position="101"/>
        <end position="103"/>
    </location>
</feature>
<feature type="strand" evidence="14">
    <location>
        <begin position="121"/>
        <end position="126"/>
    </location>
</feature>
<feature type="helix" evidence="14">
    <location>
        <begin position="131"/>
        <end position="133"/>
    </location>
</feature>
<feature type="strand" evidence="14">
    <location>
        <begin position="135"/>
        <end position="139"/>
    </location>
</feature>
<feature type="helix" evidence="14">
    <location>
        <begin position="150"/>
        <end position="160"/>
    </location>
</feature>
<feature type="strand" evidence="14">
    <location>
        <begin position="177"/>
        <end position="181"/>
    </location>
</feature>
<feature type="strand" evidence="14">
    <location>
        <begin position="184"/>
        <end position="191"/>
    </location>
</feature>
<feature type="helix" evidence="14">
    <location>
        <begin position="193"/>
        <end position="195"/>
    </location>
</feature>
<feature type="strand" evidence="14">
    <location>
        <begin position="196"/>
        <end position="198"/>
    </location>
</feature>
<feature type="helix" evidence="14">
    <location>
        <begin position="202"/>
        <end position="214"/>
    </location>
</feature>
<feature type="strand" evidence="14">
    <location>
        <begin position="218"/>
        <end position="221"/>
    </location>
</feature>
<feature type="helix" evidence="14">
    <location>
        <begin position="233"/>
        <end position="240"/>
    </location>
</feature>
<feature type="helix" evidence="14">
    <location>
        <begin position="247"/>
        <end position="255"/>
    </location>
</feature>
<feature type="helix" evidence="14">
    <location>
        <begin position="257"/>
        <end position="265"/>
    </location>
</feature>
<feature type="helix" evidence="14">
    <location>
        <begin position="270"/>
        <end position="283"/>
    </location>
</feature>
<feature type="helix" evidence="14">
    <location>
        <begin position="290"/>
        <end position="292"/>
    </location>
</feature>
<feature type="helix" evidence="14">
    <location>
        <begin position="296"/>
        <end position="310"/>
    </location>
</feature>
<feature type="strand" evidence="14">
    <location>
        <begin position="312"/>
        <end position="315"/>
    </location>
</feature>
<feature type="helix" evidence="14">
    <location>
        <begin position="318"/>
        <end position="320"/>
    </location>
</feature>
<feature type="helix" evidence="14">
    <location>
        <begin position="325"/>
        <end position="333"/>
    </location>
</feature>
<feature type="turn" evidence="14">
    <location>
        <begin position="334"/>
        <end position="337"/>
    </location>
</feature>
<feature type="strand" evidence="12">
    <location>
        <begin position="339"/>
        <end position="341"/>
    </location>
</feature>
<feature type="strand" evidence="14">
    <location>
        <begin position="343"/>
        <end position="346"/>
    </location>
</feature>
<feature type="helix" evidence="14">
    <location>
        <begin position="348"/>
        <end position="361"/>
    </location>
</feature>
<feature type="turn" evidence="14">
    <location>
        <begin position="362"/>
        <end position="364"/>
    </location>
</feature>
<feature type="strand" evidence="14">
    <location>
        <begin position="365"/>
        <end position="371"/>
    </location>
</feature>
<feature type="strand" evidence="14">
    <location>
        <begin position="373"/>
        <end position="380"/>
    </location>
</feature>
<feature type="strand" evidence="14">
    <location>
        <begin position="382"/>
        <end position="385"/>
    </location>
</feature>
<feature type="strand" evidence="14">
    <location>
        <begin position="388"/>
        <end position="394"/>
    </location>
</feature>
<feature type="strand" evidence="14">
    <location>
        <begin position="399"/>
        <end position="409"/>
    </location>
</feature>
<feature type="helix" evidence="14">
    <location>
        <begin position="413"/>
        <end position="420"/>
    </location>
</feature>
<feature type="strand" evidence="14">
    <location>
        <begin position="421"/>
        <end position="423"/>
    </location>
</feature>
<feature type="strand" evidence="14">
    <location>
        <begin position="428"/>
        <end position="434"/>
    </location>
</feature>
<feature type="helix" evidence="14">
    <location>
        <begin position="436"/>
        <end position="438"/>
    </location>
</feature>
<feature type="strand" evidence="14">
    <location>
        <begin position="443"/>
        <end position="449"/>
    </location>
</feature>
<feature type="helix" evidence="14">
    <location>
        <begin position="459"/>
        <end position="470"/>
    </location>
</feature>
<feature type="strand" evidence="14">
    <location>
        <begin position="477"/>
        <end position="485"/>
    </location>
</feature>
<feature type="helix" evidence="14">
    <location>
        <begin position="486"/>
        <end position="490"/>
    </location>
</feature>
<feature type="strand" evidence="14">
    <location>
        <begin position="504"/>
        <end position="507"/>
    </location>
</feature>
<feature type="turn" evidence="14">
    <location>
        <begin position="508"/>
        <end position="511"/>
    </location>
</feature>
<feature type="strand" evidence="14">
    <location>
        <begin position="512"/>
        <end position="518"/>
    </location>
</feature>
<feature type="strand" evidence="14">
    <location>
        <begin position="529"/>
        <end position="539"/>
    </location>
</feature>
<feature type="helix" evidence="14">
    <location>
        <begin position="541"/>
        <end position="547"/>
    </location>
</feature>
<feature type="strand" evidence="14">
    <location>
        <begin position="552"/>
        <end position="561"/>
    </location>
</feature>
<feature type="helix" evidence="14">
    <location>
        <begin position="565"/>
        <end position="574"/>
    </location>
</feature>
<feature type="helix" evidence="14">
    <location>
        <begin position="591"/>
        <end position="597"/>
    </location>
</feature>
<feature type="strand" evidence="14">
    <location>
        <begin position="605"/>
        <end position="608"/>
    </location>
</feature>
<feature type="helix" evidence="14">
    <location>
        <begin position="609"/>
        <end position="611"/>
    </location>
</feature>
<feature type="strand" evidence="14">
    <location>
        <begin position="615"/>
        <end position="619"/>
    </location>
</feature>
<feature type="turn" evidence="14">
    <location>
        <begin position="623"/>
        <end position="625"/>
    </location>
</feature>
<feature type="helix" evidence="14">
    <location>
        <begin position="626"/>
        <end position="634"/>
    </location>
</feature>
<feature type="helix" evidence="14">
    <location>
        <begin position="635"/>
        <end position="640"/>
    </location>
</feature>
<feature type="turn" evidence="14">
    <location>
        <begin position="642"/>
        <end position="644"/>
    </location>
</feature>
<feature type="strand" evidence="14">
    <location>
        <begin position="648"/>
        <end position="650"/>
    </location>
</feature>
<feature type="helix" evidence="14">
    <location>
        <begin position="653"/>
        <end position="655"/>
    </location>
</feature>
<feature type="helix" evidence="14">
    <location>
        <begin position="662"/>
        <end position="680"/>
    </location>
</feature>
<feature type="turn" evidence="14">
    <location>
        <begin position="681"/>
        <end position="683"/>
    </location>
</feature>
<feature type="helix" evidence="14">
    <location>
        <begin position="685"/>
        <end position="687"/>
    </location>
</feature>
<feature type="turn" evidence="14">
    <location>
        <begin position="690"/>
        <end position="693"/>
    </location>
</feature>
<feature type="helix" evidence="14">
    <location>
        <begin position="694"/>
        <end position="697"/>
    </location>
</feature>
<sequence length="714" mass="76883">MGVTVIPRLLGLKDEKKIATTVGEARLSGINYRHPDSALVSYPVAAAAPLGRLPAGNYRIAIVGGGAGGIAALYELGRLAATLPAGSGIDVQIYEADPDSFLHDRPGIKAIKVRGLKAGRVSAALVHNGDPASGDTIYEVGAMRFPEIAGLTWHYASAAFGDAAPIKVFPNPGKVPTEFVFGNRVDRYVGSDPKDWEDPDSPTLKVLGVVAGGLVGNPQGENVAMYPIANVDPAKIAAILNAATPPADALERIQTKYWPEFIAQYDGLTLGAAVREIVTVAFEKGTLPPVDGVLDVDESISYYVELFGRFGFGTGGFKPLYNISLVEMMRLILWDYSNEYTLPVTENVEFIRNLFLKAQNVGAGKLVVQVRQERVANACHSGTASARAQLLSYDSHNAVHSEAYDFVILAVPHDQLTPIVSRSGFEHAASQNLGDAGLGLETHTYNQVYPPLLLSDSSPAANARIVTAIGQLHMARSSKVFATVKTAALDQPWVPQWRGEPIKAVVSDSGLAASYVVPSPIVEDGQAPEYSSLLASYTWEDDSTRLRHDFGLYPQNPATETGTADGMYRTMVNRAYRYVKYAGASNAQPWWFYQLLAEARTADRFVFDWTTNKTAGGFKLDMTGDHHQSNLCFRYHTHALAASLDNRFFIASDSYSHLGGWLEGAFMSALNAVAGLIVRANRGDVSALSTEARPLVIGLRPVVKVPAAELATSQ</sequence>
<comment type="function">
    <text evidence="1 2 5 6 7 8">Catalyzes both oxygenative decarboxylation and oxidative deamination, depending on the substrate used. Has high activity for L-Phe and L-Tyr, but relatively low activities for L-Met and L-Trp. L-Phe is mainly oxygenated and L-Met is mainly oxidized.</text>
</comment>
<comment type="catalytic activity">
    <reaction evidence="2 7 8">
        <text>L-phenylalanine + O2 = 2-phenylacetamide + CO2 + H2O</text>
        <dbReference type="Rhea" id="RHEA:10712"/>
        <dbReference type="ChEBI" id="CHEBI:15377"/>
        <dbReference type="ChEBI" id="CHEBI:15379"/>
        <dbReference type="ChEBI" id="CHEBI:16526"/>
        <dbReference type="ChEBI" id="CHEBI:16562"/>
        <dbReference type="ChEBI" id="CHEBI:58095"/>
        <dbReference type="EC" id="1.13.12.9"/>
    </reaction>
</comment>
<comment type="cofactor">
    <cofactor evidence="1 7">
        <name>FAD</name>
        <dbReference type="ChEBI" id="CHEBI:57692"/>
    </cofactor>
    <text evidence="1 7">Binds 2 FAD per tetramer.</text>
</comment>
<comment type="biophysicochemical properties">
    <kinetics>
        <KM evidence="5 6 7">11.1 uM for L-Phe (for the oxygenation reaction)</KM>
        <KM evidence="5 6 7">13.3 uM for L-Phe (for the oxidation reaction)</KM>
        <KM evidence="5 6 7">4 mM for L-Tyr</KM>
        <KM evidence="5 6 7">2.2 mM for L-Met</KM>
        <KM evidence="5 6 7">1.96 mM for O(2) (for the oxygenation reaction with L-Phe as cosubstrate)</KM>
        <KM evidence="5 6 7">2.04 mM for O(2) (for the oxidation reaction with L-Phe as cosubstrate)</KM>
        <KM evidence="5 6 7">3.145 mM for O(2) (with L-Tyr as cosubstrate)</KM>
        <KM evidence="5 6 7">1.258 mM for O(2) (with L-Met as cosubstrate)</KM>
    </kinetics>
    <phDependence>
        <text evidence="5 6 7">Optimum pH is 6-9 for the oxygenation reaction and 10.5 for the oxidation reaction.</text>
    </phDependence>
    <temperatureDependence>
        <text evidence="5 6 7">Optimum temperature is 45 degrees Celsius for the oxygenation reaction and 65 degrees Celsius for the oxygenation reaction. Stable up to 70 degrees Celsius.</text>
    </temperatureDependence>
</comment>
<comment type="subunit">
    <text evidence="3 9">Heterotetramer composed of 2 alpha and 2 beta subunits.</text>
</comment>
<comment type="PTM">
    <text evidence="1">Proteolytically cleaved to yield the active enzyme. Cleavage of the linkage between the 2 subunits causes reshaping of the oxygen channel and the hydrophobic environment around the flavin ring. Removal of the prosequence causes opening of the amino acid channel.</text>
</comment>
<comment type="similarity">
    <text evidence="11">Belongs to the phenylalanine 2-monooxygenase family.</text>
</comment>
<protein>
    <recommendedName>
        <fullName>Phenylalanine 2-monooxygenase precursor</fullName>
        <shortName>proPAO</shortName>
        <ecNumber>1.13.12.9</ecNumber>
    </recommendedName>
    <alternativeName>
        <fullName>L-phenylalanine oxidase (deaminating and decarboxylating)</fullName>
        <shortName>PAO</shortName>
    </alternativeName>
    <component>
        <recommendedName>
            <fullName>Phenylalanine 2-monooxygenase alpha subunit</fullName>
        </recommendedName>
    </component>
    <component>
        <recommendedName>
            <fullName>Phenylalanine 2-monooxygenase beta subunit</fullName>
        </recommendedName>
    </component>
</protein>
<reference key="1">
    <citation type="journal article" date="2004" name="J. Biochem.">
        <title>Sequencing and expression of the L-phenylalanine oxidase gene from Pseudomonas sp. P-501. Proteolytic activation of the proenzyme.</title>
        <authorList>
            <person name="Suzuki H."/>
            <person name="Higashi Y."/>
            <person name="Asano M."/>
            <person name="Suguro M."/>
            <person name="Kigawa M."/>
            <person name="Maeda M."/>
            <person name="Katayama S."/>
            <person name="Mukouyama E.B."/>
            <person name="Uchiyama K."/>
        </authorList>
    </citation>
    <scope>NUCLEOTIDE SEQUENCE [GENOMIC DNA]</scope>
    <scope>FUNCTION</scope>
    <scope>COFACTOR</scope>
    <scope>PROTEOLYTIC PROCESSING</scope>
    <source>
        <strain>P-501</strain>
    </source>
</reference>
<reference key="2">
    <citation type="journal article" date="1994" name="Arch. Biochem. Biophys.">
        <title>New subunit in L-phenylalanine oxidase from Pseudomonas sp. P-501 and the primary structure.</title>
        <authorList>
            <person name="Mukouyama E.B."/>
            <person name="Suzuki H."/>
            <person name="Koyama H."/>
        </authorList>
    </citation>
    <scope>PROTEIN SEQUENCE OF 16-107</scope>
    <scope>SUBUNIT</scope>
    <source>
        <strain>P-501</strain>
    </source>
</reference>
<reference key="3">
    <citation type="journal article" date="1998" name="J. Biochem.">
        <title>Chemical modification of L-phenylalanine oxidase from Pseudomonas sp. P-501 by phenylglyoxal. Identification of one essential arginyl residue.</title>
        <authorList>
            <person name="Mukouyama E.B."/>
            <person name="Hirose T."/>
            <person name="Suzuki H."/>
        </authorList>
    </citation>
    <scope>PROTEIN SEQUENCE OF 110-183</scope>
</reference>
<reference key="4">
    <citation type="journal article" date="1982" name="J. Biochem.">
        <title>Purification and characterization of a novel L-phenylalanine oxidase (deaminating and decarboxylating) from Pseudomonas sp. P-501.</title>
        <authorList>
            <person name="Koyama H."/>
        </authorList>
    </citation>
    <scope>FUNCTION</scope>
    <scope>CATALYTIC ACTIVITY</scope>
    <scope>SUBSTRATE SPECIFICITY</scope>
</reference>
<reference key="5">
    <citation type="journal article" date="1983" name="J. Biochem.">
        <title>Further characterization of a novel L-phenylalanine oxidase (deaminating and decarboxylating) from Pseudomonas sp. P-501.</title>
        <authorList>
            <person name="Koyama H."/>
        </authorList>
    </citation>
    <scope>FUNCTION</scope>
    <scope>CATALYTIC ACTIVITY</scope>
    <scope>COFACTOR</scope>
    <scope>BIOPHYSICOCHEMICAL PROPERTIES</scope>
</reference>
<reference key="6">
    <citation type="journal article" date="1984" name="J. Biochem.">
        <title>Oxidation and oxygenation of L-amino acids catalyzed by a L-phenylalanine oxidase (deaminating and decarboxylating) from Pseudomonas sp. P-501.</title>
        <authorList>
            <person name="Koyama H."/>
        </authorList>
    </citation>
    <scope>FUNCTION</scope>
    <scope>BIOPHYSICOCHEMICAL PROPERTIES</scope>
</reference>
<reference key="7">
    <citation type="journal article" date="1986" name="J. Biochem.">
        <title>Spectral and kinetic studies on Pseudomonas L-phenylalanine oxidase (deaminating and decarboxylating).</title>
        <authorList>
            <person name="Koyama H."/>
            <person name="Suzuki H."/>
        </authorList>
    </citation>
    <scope>FUNCTION</scope>
    <scope>BIOPHYSICOCHEMICAL PROPERTIES</scope>
</reference>
<reference key="8">
    <citation type="journal article" date="2006" name="J. Biochem.">
        <title>Kinetic isotope effect of the L-phenylalanine oxidase from Pseudomonas sp. P-501.</title>
        <authorList>
            <person name="Ohta Y."/>
            <person name="Mukouyama E.B."/>
            <person name="Suzuki H."/>
        </authorList>
    </citation>
    <scope>FUNCTION</scope>
    <scope>CATALYTIC ACTIVITY</scope>
</reference>
<reference key="9">
    <citation type="journal article" date="2008" name="J. Biol. Chem.">
        <title>Structural basis of proteolytic activation of L-phenylalanine oxidase from Pseudomonas sp. P-501.</title>
        <authorList>
            <person name="Ida K."/>
            <person name="Kurabayashi M."/>
            <person name="Suguro M."/>
            <person name="Hiruma Y."/>
            <person name="Hikima T."/>
            <person name="Yamomoto M."/>
            <person name="Suzuki H."/>
        </authorList>
    </citation>
    <scope>X-RAY CRYSTALLOGRAPHY (1.25 ANGSTROMS) OF 2-714 IN COMPLEX WITH FAD AND SUBSTRATE ANALOG</scope>
    <scope>MUTAGENESIS OF MET-143 AND LYS-479</scope>
    <source>
        <strain>P-501</strain>
    </source>
</reference>
<reference key="10">
    <citation type="journal article" date="2011" name="J. Biochem.">
        <title>High resolution X-ray crystal structures of L-phenylalanine oxidase (deaminating and decarboxylating) from Pseudomonas sp. P-501. Structures of the enzyme-ligand complex and catalytic mechanism.</title>
        <authorList>
            <person name="Ida K."/>
            <person name="Suguro M."/>
            <person name="Suzuki H."/>
        </authorList>
    </citation>
    <scope>X-RAY CRYSTALLOGRAPHY (1.10 ANGSTROMS) OF 2-714 IN COMPLEXES WITH L-PHENYLALANINE AND L-METHIONINE</scope>
    <scope>MUTAGENESIS OF ARG-144 AND TYR-537</scope>
    <source>
        <strain>P-501</strain>
    </source>
</reference>
<organism>
    <name type="scientific">Pseudomonas sp</name>
    <dbReference type="NCBI Taxonomy" id="306"/>
    <lineage>
        <taxon>Bacteria</taxon>
        <taxon>Pseudomonadati</taxon>
        <taxon>Pseudomonadota</taxon>
        <taxon>Gammaproteobacteria</taxon>
        <taxon>Pseudomonadales</taxon>
        <taxon>Pseudomonadaceae</taxon>
        <taxon>Pseudomonas</taxon>
    </lineage>
</organism>
<dbReference type="EC" id="1.13.12.9"/>
<dbReference type="EMBL" id="AB167410">
    <property type="protein sequence ID" value="BAD66877.1"/>
    <property type="molecule type" value="Genomic_DNA"/>
</dbReference>
<dbReference type="PIR" id="S41662">
    <property type="entry name" value="S41662"/>
</dbReference>
<dbReference type="PDB" id="2YR4">
    <property type="method" value="X-ray"/>
    <property type="resolution" value="1.70 A"/>
    <property type="chains" value="A/B=2-714"/>
</dbReference>
<dbReference type="PDB" id="2YR5">
    <property type="method" value="X-ray"/>
    <property type="resolution" value="1.25 A"/>
    <property type="chains" value="A/B=2-714"/>
</dbReference>
<dbReference type="PDB" id="2YR6">
    <property type="method" value="X-ray"/>
    <property type="resolution" value="1.35 A"/>
    <property type="chains" value="A/B=2-714"/>
</dbReference>
<dbReference type="PDB" id="3AYI">
    <property type="method" value="X-ray"/>
    <property type="resolution" value="1.25 A"/>
    <property type="chains" value="A/B=2-714"/>
</dbReference>
<dbReference type="PDB" id="3AYJ">
    <property type="method" value="X-ray"/>
    <property type="resolution" value="1.10 A"/>
    <property type="chains" value="A/B=2-714"/>
</dbReference>
<dbReference type="PDB" id="3AYL">
    <property type="method" value="X-ray"/>
    <property type="resolution" value="1.25 A"/>
    <property type="chains" value="A/B=2-714"/>
</dbReference>
<dbReference type="PDBsum" id="2YR4"/>
<dbReference type="PDBsum" id="2YR5"/>
<dbReference type="PDBsum" id="2YR6"/>
<dbReference type="PDBsum" id="3AYI"/>
<dbReference type="PDBsum" id="3AYJ"/>
<dbReference type="PDBsum" id="3AYL"/>
<dbReference type="SMR" id="Q5W9R9"/>
<dbReference type="KEGG" id="ag:BAD66877"/>
<dbReference type="BRENDA" id="1.13.12.9">
    <property type="organism ID" value="5085"/>
</dbReference>
<dbReference type="EvolutionaryTrace" id="Q5W9R9"/>
<dbReference type="GO" id="GO:0000166">
    <property type="term" value="F:nucleotide binding"/>
    <property type="evidence" value="ECO:0007669"/>
    <property type="project" value="UniProtKB-KW"/>
</dbReference>
<dbReference type="GO" id="GO:0050172">
    <property type="term" value="F:phenylalanine 2-monooxygenase activity"/>
    <property type="evidence" value="ECO:0000314"/>
    <property type="project" value="UniProtKB"/>
</dbReference>
<dbReference type="Gene3D" id="3.90.660.60">
    <property type="match status" value="1"/>
</dbReference>
<dbReference type="Gene3D" id="3.50.50.60">
    <property type="entry name" value="FAD/NAD(P)-binding domain"/>
    <property type="match status" value="1"/>
</dbReference>
<dbReference type="InterPro" id="IPR036188">
    <property type="entry name" value="FAD/NAD-bd_sf"/>
</dbReference>
<dbReference type="SUPFAM" id="SSF51905">
    <property type="entry name" value="FAD/NAD(P)-binding domain"/>
    <property type="match status" value="1"/>
</dbReference>
<keyword id="KW-0002">3D-structure</keyword>
<keyword id="KW-0903">Direct protein sequencing</keyword>
<keyword id="KW-0274">FAD</keyword>
<keyword id="KW-0285">Flavoprotein</keyword>
<keyword id="KW-0503">Monooxygenase</keyword>
<keyword id="KW-0547">Nucleotide-binding</keyword>
<keyword id="KW-0560">Oxidoreductase</keyword>
<keyword id="KW-0865">Zymogen</keyword>
<evidence type="ECO:0000269" key="1">
    <source>
    </source>
</evidence>
<evidence type="ECO:0000269" key="2">
    <source>
    </source>
</evidence>
<evidence type="ECO:0000269" key="3">
    <source>
    </source>
</evidence>
<evidence type="ECO:0000269" key="4">
    <source>
    </source>
</evidence>
<evidence type="ECO:0000269" key="5">
    <source>
    </source>
</evidence>
<evidence type="ECO:0000269" key="6">
    <source>
    </source>
</evidence>
<evidence type="ECO:0000269" key="7">
    <source>
    </source>
</evidence>
<evidence type="ECO:0000269" key="8">
    <source>
    </source>
</evidence>
<evidence type="ECO:0000269" key="9">
    <source>
    </source>
</evidence>
<evidence type="ECO:0000269" key="10">
    <source>
    </source>
</evidence>
<evidence type="ECO:0000305" key="11"/>
<evidence type="ECO:0007829" key="12">
    <source>
        <dbReference type="PDB" id="2YR4"/>
    </source>
</evidence>
<evidence type="ECO:0007829" key="13">
    <source>
        <dbReference type="PDB" id="2YR5"/>
    </source>
</evidence>
<evidence type="ECO:0007829" key="14">
    <source>
        <dbReference type="PDB" id="3AYJ"/>
    </source>
</evidence>
<accession>Q5W9R9</accession>
<accession>Q7M1A6</accession>
<proteinExistence type="evidence at protein level"/>
<name>PAO_PSESP</name>